<organism>
    <name type="scientific">Pseudarthrobacter chlorophenolicus (strain ATCC 700700 / DSM 12829 / CIP 107037 / JCM 12360 / KCTC 9906 / NCIMB 13794 / A6)</name>
    <name type="common">Arthrobacter chlorophenolicus</name>
    <dbReference type="NCBI Taxonomy" id="452863"/>
    <lineage>
        <taxon>Bacteria</taxon>
        <taxon>Bacillati</taxon>
        <taxon>Actinomycetota</taxon>
        <taxon>Actinomycetes</taxon>
        <taxon>Micrococcales</taxon>
        <taxon>Micrococcaceae</taxon>
        <taxon>Pseudarthrobacter</taxon>
    </lineage>
</organism>
<feature type="chain" id="PRO_1000195873" description="Large ribosomal subunit protein bL27">
    <location>
        <begin position="1"/>
        <end position="87"/>
    </location>
</feature>
<name>RL27_PSECP</name>
<keyword id="KW-0687">Ribonucleoprotein</keyword>
<keyword id="KW-0689">Ribosomal protein</keyword>
<proteinExistence type="inferred from homology"/>
<comment type="similarity">
    <text evidence="1">Belongs to the bacterial ribosomal protein bL27 family.</text>
</comment>
<gene>
    <name evidence="1" type="primary">rpmA</name>
    <name type="ordered locus">Achl_2144</name>
</gene>
<protein>
    <recommendedName>
        <fullName evidence="1">Large ribosomal subunit protein bL27</fullName>
    </recommendedName>
    <alternativeName>
        <fullName evidence="2">50S ribosomal protein L27</fullName>
    </alternativeName>
</protein>
<sequence length="87" mass="9046">MAHKKGASSTRNGRDSNAQYLGVKRFGGQVVSAGEIIVRQRGTHFHPGAGVGRGGDDTLFALTPGAVEFGTRRGRRVVNIVAAAAAE</sequence>
<evidence type="ECO:0000255" key="1">
    <source>
        <dbReference type="HAMAP-Rule" id="MF_00539"/>
    </source>
</evidence>
<evidence type="ECO:0000305" key="2"/>
<reference key="1">
    <citation type="submission" date="2009-01" db="EMBL/GenBank/DDBJ databases">
        <title>Complete sequence of chromosome of Arthrobacter chlorophenolicus A6.</title>
        <authorList>
            <consortium name="US DOE Joint Genome Institute"/>
            <person name="Lucas S."/>
            <person name="Copeland A."/>
            <person name="Lapidus A."/>
            <person name="Glavina del Rio T."/>
            <person name="Tice H."/>
            <person name="Bruce D."/>
            <person name="Goodwin L."/>
            <person name="Pitluck S."/>
            <person name="Goltsman E."/>
            <person name="Clum A."/>
            <person name="Larimer F."/>
            <person name="Land M."/>
            <person name="Hauser L."/>
            <person name="Kyrpides N."/>
            <person name="Mikhailova N."/>
            <person name="Jansson J."/>
            <person name="Richardson P."/>
        </authorList>
    </citation>
    <scope>NUCLEOTIDE SEQUENCE [LARGE SCALE GENOMIC DNA]</scope>
    <source>
        <strain>ATCC 700700 / DSM 12829 / CIP 107037 / JCM 12360 / KCTC 9906 / NCIMB 13794 / A6</strain>
    </source>
</reference>
<dbReference type="EMBL" id="CP001341">
    <property type="protein sequence ID" value="ACL40112.1"/>
    <property type="molecule type" value="Genomic_DNA"/>
</dbReference>
<dbReference type="RefSeq" id="WP_009372867.1">
    <property type="nucleotide sequence ID" value="NC_011886.1"/>
</dbReference>
<dbReference type="SMR" id="B8HA20"/>
<dbReference type="STRING" id="452863.Achl_2144"/>
<dbReference type="GeneID" id="97422948"/>
<dbReference type="KEGG" id="ach:Achl_2144"/>
<dbReference type="eggNOG" id="COG0211">
    <property type="taxonomic scope" value="Bacteria"/>
</dbReference>
<dbReference type="HOGENOM" id="CLU_095424_4_0_11"/>
<dbReference type="OrthoDB" id="9803474at2"/>
<dbReference type="Proteomes" id="UP000002505">
    <property type="component" value="Chromosome"/>
</dbReference>
<dbReference type="GO" id="GO:0022625">
    <property type="term" value="C:cytosolic large ribosomal subunit"/>
    <property type="evidence" value="ECO:0007669"/>
    <property type="project" value="TreeGrafter"/>
</dbReference>
<dbReference type="GO" id="GO:0003735">
    <property type="term" value="F:structural constituent of ribosome"/>
    <property type="evidence" value="ECO:0007669"/>
    <property type="project" value="InterPro"/>
</dbReference>
<dbReference type="GO" id="GO:0006412">
    <property type="term" value="P:translation"/>
    <property type="evidence" value="ECO:0007669"/>
    <property type="project" value="UniProtKB-UniRule"/>
</dbReference>
<dbReference type="FunFam" id="2.40.50.100:FF:000020">
    <property type="entry name" value="50S ribosomal protein L27"/>
    <property type="match status" value="1"/>
</dbReference>
<dbReference type="Gene3D" id="2.40.50.100">
    <property type="match status" value="1"/>
</dbReference>
<dbReference type="HAMAP" id="MF_00539">
    <property type="entry name" value="Ribosomal_bL27"/>
    <property type="match status" value="1"/>
</dbReference>
<dbReference type="InterPro" id="IPR001684">
    <property type="entry name" value="Ribosomal_bL27"/>
</dbReference>
<dbReference type="InterPro" id="IPR018261">
    <property type="entry name" value="Ribosomal_bL27_CS"/>
</dbReference>
<dbReference type="NCBIfam" id="TIGR00062">
    <property type="entry name" value="L27"/>
    <property type="match status" value="1"/>
</dbReference>
<dbReference type="PANTHER" id="PTHR15893:SF0">
    <property type="entry name" value="LARGE RIBOSOMAL SUBUNIT PROTEIN BL27M"/>
    <property type="match status" value="1"/>
</dbReference>
<dbReference type="PANTHER" id="PTHR15893">
    <property type="entry name" value="RIBOSOMAL PROTEIN L27"/>
    <property type="match status" value="1"/>
</dbReference>
<dbReference type="Pfam" id="PF01016">
    <property type="entry name" value="Ribosomal_L27"/>
    <property type="match status" value="1"/>
</dbReference>
<dbReference type="PRINTS" id="PR00063">
    <property type="entry name" value="RIBOSOMALL27"/>
</dbReference>
<dbReference type="SUPFAM" id="SSF110324">
    <property type="entry name" value="Ribosomal L27 protein-like"/>
    <property type="match status" value="1"/>
</dbReference>
<dbReference type="PROSITE" id="PS00831">
    <property type="entry name" value="RIBOSOMAL_L27"/>
    <property type="match status" value="1"/>
</dbReference>
<accession>B8HA20</accession>